<comment type="function">
    <text evidence="1">A P subtype restriction enzyme that recognizes the double-stranded sequence 5'-GGCC-3' and cleaves after G-2.</text>
</comment>
<comment type="catalytic activity">
    <reaction>
        <text>Endonucleolytic cleavage of DNA to give specific double-stranded fragments with terminal 5'-phosphates.</text>
        <dbReference type="EC" id="3.1.21.4"/>
    </reaction>
</comment>
<keyword id="KW-0255">Endonuclease</keyword>
<keyword id="KW-0378">Hydrolase</keyword>
<keyword id="KW-0540">Nuclease</keyword>
<keyword id="KW-0680">Restriction system</keyword>
<protein>
    <recommendedName>
        <fullName evidence="1">Type II restriction enzyme HaeIII</fullName>
        <shortName>R.HaeIII</shortName>
        <ecNumber>3.1.21.4</ecNumber>
    </recommendedName>
    <alternativeName>
        <fullName>Endonuclease HaeIII</fullName>
    </alternativeName>
    <alternativeName>
        <fullName>Type-2 restriction enzyme HaeIII</fullName>
    </alternativeName>
</protein>
<feature type="chain" id="PRO_0000077317" description="Type II restriction enzyme HaeIII">
    <location>
        <begin position="1"/>
        <end position="318"/>
    </location>
</feature>
<gene>
    <name type="primary">haeIIIR</name>
</gene>
<name>T2H3_HAEAE</name>
<sequence>MSNKSNDNGRAYEFAFINELGRIATQNQNINIEKNSSYYVVEKSWSTLSDLEKEKYTKSAIAGINLITSLEPIIEDGNGVLNLKIQADNKGELGDIRDILIQRENINWEIGLSLKHNHFAVKHSRLSHKIDFSEKWFQLPSSQNYWDNILPIFEKLEIYKKDKIKWRELSNKEDCIYYPILKSFIAEIKEKYDKYNSIVPQRMVEYLLGYFDFYKIISQDNKKLTSIQSFNLRGTLNKPSKKRKADIFIPVANLPTRIIDIDFKPNSKNTVELYLDKGWQFSFRIHNASTIIEPSLKFDIKLIGVPATIICLETPWEE</sequence>
<organism>
    <name type="scientific">Haemophilus aegyptius</name>
    <dbReference type="NCBI Taxonomy" id="197575"/>
    <lineage>
        <taxon>Bacteria</taxon>
        <taxon>Pseudomonadati</taxon>
        <taxon>Pseudomonadota</taxon>
        <taxon>Gammaproteobacteria</taxon>
        <taxon>Pasteurellales</taxon>
        <taxon>Pasteurellaceae</taxon>
        <taxon>Haemophilus</taxon>
    </lineage>
</organism>
<dbReference type="EC" id="3.1.21.4"/>
<dbReference type="EMBL" id="AF051375">
    <property type="protein sequence ID" value="AAC05697.1"/>
    <property type="molecule type" value="Genomic_DNA"/>
</dbReference>
<dbReference type="RefSeq" id="WP_006996034.1">
    <property type="nucleotide sequence ID" value="NZ_UGHG01000002.1"/>
</dbReference>
<dbReference type="SMR" id="O68584"/>
<dbReference type="REBASE" id="1089">
    <property type="entry name" value="HaeIII"/>
</dbReference>
<dbReference type="PRO" id="PR:O68584"/>
<dbReference type="GO" id="GO:0009036">
    <property type="term" value="F:type II site-specific deoxyribonuclease activity"/>
    <property type="evidence" value="ECO:0007669"/>
    <property type="project" value="UniProtKB-EC"/>
</dbReference>
<dbReference type="GO" id="GO:0009307">
    <property type="term" value="P:DNA restriction-modification system"/>
    <property type="evidence" value="ECO:0007669"/>
    <property type="project" value="UniProtKB-KW"/>
</dbReference>
<dbReference type="InterPro" id="IPR019059">
    <property type="entry name" value="Restrct_endonuc_II_HaeIII"/>
</dbReference>
<dbReference type="Pfam" id="PF09556">
    <property type="entry name" value="RE_HaeIII"/>
    <property type="match status" value="1"/>
</dbReference>
<reference key="1">
    <citation type="submission" date="1998-02" db="EMBL/GenBank/DDBJ databases">
        <authorList>
            <person name="Zhang B.-H."/>
            <person name="Wilson G.G."/>
        </authorList>
    </citation>
    <scope>NUCLEOTIDE SEQUENCE [GENOMIC DNA]</scope>
    <source>
        <strain>ATCC 11116 / CCUG 25716 / NCTC 8502 / 180-a</strain>
    </source>
</reference>
<reference key="2">
    <citation type="journal article" date="2003" name="Nucleic Acids Res.">
        <title>A nomenclature for restriction enzymes, DNA methyltransferases, homing endonucleases and their genes.</title>
        <authorList>
            <person name="Roberts R.J."/>
            <person name="Belfort M."/>
            <person name="Bestor T."/>
            <person name="Bhagwat A.S."/>
            <person name="Bickle T.A."/>
            <person name="Bitinaite J."/>
            <person name="Blumenthal R.M."/>
            <person name="Degtyarev S.K."/>
            <person name="Dryden D.T."/>
            <person name="Dybvig K."/>
            <person name="Firman K."/>
            <person name="Gromova E.S."/>
            <person name="Gumport R.I."/>
            <person name="Halford S.E."/>
            <person name="Hattman S."/>
            <person name="Heitman J."/>
            <person name="Hornby D.P."/>
            <person name="Janulaitis A."/>
            <person name="Jeltsch A."/>
            <person name="Josephsen J."/>
            <person name="Kiss A."/>
            <person name="Klaenhammer T.R."/>
            <person name="Kobayashi I."/>
            <person name="Kong H."/>
            <person name="Krueger D.H."/>
            <person name="Lacks S."/>
            <person name="Marinus M.G."/>
            <person name="Miyahara M."/>
            <person name="Morgan R.D."/>
            <person name="Murray N.E."/>
            <person name="Nagaraja V."/>
            <person name="Piekarowicz A."/>
            <person name="Pingoud A."/>
            <person name="Raleigh E."/>
            <person name="Rao D.N."/>
            <person name="Reich N."/>
            <person name="Repin V.E."/>
            <person name="Selker E.U."/>
            <person name="Shaw P.C."/>
            <person name="Stein D.C."/>
            <person name="Stoddard B.L."/>
            <person name="Szybalski W."/>
            <person name="Trautner T.A."/>
            <person name="Van Etten J.L."/>
            <person name="Vitor J.M."/>
            <person name="Wilson G.G."/>
            <person name="Xu S.Y."/>
        </authorList>
    </citation>
    <scope>NOMENCLATURE</scope>
    <scope>SUBTYPE</scope>
</reference>
<evidence type="ECO:0000303" key="1">
    <source>
    </source>
</evidence>
<proteinExistence type="predicted"/>
<accession>O68584</accession>